<reference key="1">
    <citation type="journal article" date="1999" name="Nature">
        <title>Genomic sequence comparison of two unrelated isolates of the human gastric pathogen Helicobacter pylori.</title>
        <authorList>
            <person name="Alm R.A."/>
            <person name="Ling L.-S.L."/>
            <person name="Moir D.T."/>
            <person name="King B.L."/>
            <person name="Brown E.D."/>
            <person name="Doig P.C."/>
            <person name="Smith D.R."/>
            <person name="Noonan B."/>
            <person name="Guild B.C."/>
            <person name="deJonge B.L."/>
            <person name="Carmel G."/>
            <person name="Tummino P.J."/>
            <person name="Caruso A."/>
            <person name="Uria-Nickelsen M."/>
            <person name="Mills D.M."/>
            <person name="Ives C."/>
            <person name="Gibson R."/>
            <person name="Merberg D."/>
            <person name="Mills S.D."/>
            <person name="Jiang Q."/>
            <person name="Taylor D.E."/>
            <person name="Vovis G.F."/>
            <person name="Trust T.J."/>
        </authorList>
    </citation>
    <scope>NUCLEOTIDE SEQUENCE [LARGE SCALE GENOMIC DNA]</scope>
    <source>
        <strain>J99 / ATCC 700824</strain>
    </source>
</reference>
<sequence>MDLSTILGLVLAVASISLGDILEDGNPLHIIHLSSVIIIVPTSLFAAMTGTHARYVKAAYKEIKIVFLNPKINLNETIKNLVELATLARKDGVLSLEGRVAQIEDDFTRNGLSMIIDGKDLKSVKESLEISIEEMEEYYHGAAHYWETAGETAPTMGLVGAVMGLMLALQKLDNPAEMAAGIAGAFTATVTGIMCSYAIFGPFGHKLKAKSKDIIKEKTVLLEGILGIANGENPRDLENKLLNYIAPGEPKKSQFEG</sequence>
<dbReference type="EMBL" id="AE001439">
    <property type="protein sequence ID" value="AAD06330.1"/>
    <property type="molecule type" value="Genomic_DNA"/>
</dbReference>
<dbReference type="RefSeq" id="WP_000366185.1">
    <property type="nucleotide sequence ID" value="NZ_CP011330.1"/>
</dbReference>
<dbReference type="SMR" id="P65411"/>
<dbReference type="KEGG" id="hpj:jhp_0751"/>
<dbReference type="PATRIC" id="fig|85963.30.peg.225"/>
<dbReference type="eggNOG" id="COG1291">
    <property type="taxonomic scope" value="Bacteria"/>
</dbReference>
<dbReference type="Proteomes" id="UP000000804">
    <property type="component" value="Chromosome"/>
</dbReference>
<dbReference type="GO" id="GO:0005886">
    <property type="term" value="C:plasma membrane"/>
    <property type="evidence" value="ECO:0007669"/>
    <property type="project" value="UniProtKB-SubCell"/>
</dbReference>
<dbReference type="GO" id="GO:0071978">
    <property type="term" value="P:bacterial-type flagellum-dependent swarming motility"/>
    <property type="evidence" value="ECO:0007669"/>
    <property type="project" value="InterPro"/>
</dbReference>
<dbReference type="GO" id="GO:0006935">
    <property type="term" value="P:chemotaxis"/>
    <property type="evidence" value="ECO:0007669"/>
    <property type="project" value="UniProtKB-KW"/>
</dbReference>
<dbReference type="GO" id="GO:1902600">
    <property type="term" value="P:proton transmembrane transport"/>
    <property type="evidence" value="ECO:0007669"/>
    <property type="project" value="UniProtKB-KW"/>
</dbReference>
<dbReference type="InterPro" id="IPR000540">
    <property type="entry name" value="Flag_MotA_CS"/>
</dbReference>
<dbReference type="InterPro" id="IPR047055">
    <property type="entry name" value="MotA-like"/>
</dbReference>
<dbReference type="InterPro" id="IPR002898">
    <property type="entry name" value="MotA_ExbB_proton_chnl"/>
</dbReference>
<dbReference type="NCBIfam" id="NF006284">
    <property type="entry name" value="PRK08456.1"/>
    <property type="match status" value="1"/>
</dbReference>
<dbReference type="PANTHER" id="PTHR30433">
    <property type="entry name" value="CHEMOTAXIS PROTEIN MOTA"/>
    <property type="match status" value="1"/>
</dbReference>
<dbReference type="PANTHER" id="PTHR30433:SF3">
    <property type="entry name" value="MOTILITY PROTEIN A"/>
    <property type="match status" value="1"/>
</dbReference>
<dbReference type="Pfam" id="PF01618">
    <property type="entry name" value="MotA_ExbB"/>
    <property type="match status" value="1"/>
</dbReference>
<dbReference type="PROSITE" id="PS01307">
    <property type="entry name" value="MOTA"/>
    <property type="match status" value="1"/>
</dbReference>
<organism>
    <name type="scientific">Helicobacter pylori (strain J99 / ATCC 700824)</name>
    <name type="common">Campylobacter pylori J99</name>
    <dbReference type="NCBI Taxonomy" id="85963"/>
    <lineage>
        <taxon>Bacteria</taxon>
        <taxon>Pseudomonadati</taxon>
        <taxon>Campylobacterota</taxon>
        <taxon>Epsilonproteobacteria</taxon>
        <taxon>Campylobacterales</taxon>
        <taxon>Helicobacteraceae</taxon>
        <taxon>Helicobacter</taxon>
    </lineage>
</organism>
<accession>P65411</accession>
<accession>P56426</accession>
<protein>
    <recommendedName>
        <fullName>Motility protein A</fullName>
    </recommendedName>
    <alternativeName>
        <fullName>Chemotaxis protein MotA</fullName>
    </alternativeName>
</protein>
<name>MOTA_HELPJ</name>
<keyword id="KW-0997">Cell inner membrane</keyword>
<keyword id="KW-1003">Cell membrane</keyword>
<keyword id="KW-0145">Chemotaxis</keyword>
<keyword id="KW-0283">Flagellar rotation</keyword>
<keyword id="KW-0375">Hydrogen ion transport</keyword>
<keyword id="KW-0406">Ion transport</keyword>
<keyword id="KW-0472">Membrane</keyword>
<keyword id="KW-0812">Transmembrane</keyword>
<keyword id="KW-1133">Transmembrane helix</keyword>
<keyword id="KW-0813">Transport</keyword>
<proteinExistence type="inferred from homology"/>
<gene>
    <name type="primary">motA</name>
    <name type="ordered locus">jhp_0751</name>
</gene>
<feature type="chain" id="PRO_0000189575" description="Motility protein A">
    <location>
        <begin position="1"/>
        <end position="257"/>
    </location>
</feature>
<feature type="transmembrane region" description="Helical" evidence="2">
    <location>
        <begin position="3"/>
        <end position="23"/>
    </location>
</feature>
<feature type="transmembrane region" description="Helical" evidence="2">
    <location>
        <begin position="28"/>
        <end position="48"/>
    </location>
</feature>
<feature type="transmembrane region" description="Helical" evidence="2">
    <location>
        <begin position="149"/>
        <end position="169"/>
    </location>
</feature>
<feature type="transmembrane region" description="Helical" evidence="2">
    <location>
        <begin position="180"/>
        <end position="200"/>
    </location>
</feature>
<feature type="topological domain" description="Cytoplasmic" evidence="2">
    <location>
        <begin position="201"/>
        <end position="257"/>
    </location>
</feature>
<evidence type="ECO:0000250" key="1"/>
<evidence type="ECO:0000255" key="2"/>
<evidence type="ECO:0000305" key="3"/>
<comment type="function">
    <text evidence="1">MotA and MotB comprise the stator element of the flagellar motor complex. Required for rotation of the flagellar motor. Probable transmembrane proton channel (By similarity).</text>
</comment>
<comment type="subunit">
    <text evidence="1">Each stator complex is composed of 4 MotA and 2 MotB subunits. 2 A subunits and 1 B subunit are thought to form a single ion channel, so that each stator complex contains two channels (By similarity).</text>
</comment>
<comment type="subcellular location">
    <subcellularLocation>
        <location evidence="1">Cell inner membrane</location>
        <topology evidence="3">Multi-pass membrane protein</topology>
    </subcellularLocation>
</comment>
<comment type="similarity">
    <text evidence="3">Belongs to the MotA family.</text>
</comment>